<accession>C5JJ91</accession>
<accession>A0A179UGQ2</accession>
<proteinExistence type="inferred from homology"/>
<gene>
    <name type="primary">STS1</name>
    <name type="ORF">BDBG_02635</name>
</gene>
<protein>
    <recommendedName>
        <fullName>Tethering factor for nuclear proteasome STS1</fullName>
    </recommendedName>
</protein>
<comment type="function">
    <text evidence="1">Involved in ubiquitin-mediated protein degradation. Regulatory factor in the ubiquitin/proteasome pathway that controls the turnover of proteasome substrates. Targets proteasomes to the nucleus and facilitates the degradation of nuclear proteins (By similarity).</text>
</comment>
<comment type="subunit">
    <text evidence="1">Binds the proteasome.</text>
</comment>
<comment type="subcellular location">
    <subcellularLocation>
        <location evidence="1">Cytoplasm</location>
    </subcellularLocation>
    <subcellularLocation>
        <location evidence="1">Nucleus</location>
    </subcellularLocation>
</comment>
<comment type="similarity">
    <text evidence="3">Belongs to the cut8/STS1 family.</text>
</comment>
<feature type="chain" id="PRO_0000409391" description="Tethering factor for nuclear proteasome STS1">
    <location>
        <begin position="1"/>
        <end position="311"/>
    </location>
</feature>
<feature type="region of interest" description="Disordered" evidence="2">
    <location>
        <begin position="1"/>
        <end position="81"/>
    </location>
</feature>
<feature type="compositionally biased region" description="Low complexity" evidence="2">
    <location>
        <begin position="21"/>
        <end position="32"/>
    </location>
</feature>
<feature type="compositionally biased region" description="Basic and acidic residues" evidence="2">
    <location>
        <begin position="38"/>
        <end position="51"/>
    </location>
</feature>
<feature type="compositionally biased region" description="Low complexity" evidence="2">
    <location>
        <begin position="53"/>
        <end position="64"/>
    </location>
</feature>
<keyword id="KW-0963">Cytoplasm</keyword>
<keyword id="KW-0539">Nucleus</keyword>
<keyword id="KW-0653">Protein transport</keyword>
<keyword id="KW-1185">Reference proteome</keyword>
<keyword id="KW-0813">Transport</keyword>
<sequence>MNSLLATPPVPPHFYEHCRLSPSRSMSSTNPSGNRKRKAEDDYLPSDHDTRMSASPSNSPAFSPRTLPAPRQIKRSRPNISGRPLALSRLLETLDTDALRSILRSMCDRHPELASEVVQTAPRPSVSSALQVLNNYQSALQSSIPLGGNSSSDYAYNRVRQHIVNLLDALSDFTPHFLPPNESQVSTALNYLDGATEIIHRLPRWDTPQHNLEKDAAYEEMAKAWILVIREAGKRGGGIQLQYGGWDQKLSKHNQTAGGKLQDAVNTLSSNLGWMGNQDLSNSQGGDASSIRQQLLSGTYGSGMPLKVGPW</sequence>
<name>STS1_BLAGS</name>
<reference key="1">
    <citation type="journal article" date="2015" name="PLoS Genet.">
        <title>The dynamic genome and transcriptome of the human fungal pathogen Blastomyces and close relative Emmonsia.</title>
        <authorList>
            <person name="Munoz J.F."/>
            <person name="Gauthier G.M."/>
            <person name="Desjardins C.A."/>
            <person name="Gallo J.E."/>
            <person name="Holder J."/>
            <person name="Sullivan T.D."/>
            <person name="Marty A.J."/>
            <person name="Carmen J.C."/>
            <person name="Chen Z."/>
            <person name="Ding L."/>
            <person name="Gujja S."/>
            <person name="Magrini V."/>
            <person name="Misas E."/>
            <person name="Mitreva M."/>
            <person name="Priest M."/>
            <person name="Saif S."/>
            <person name="Whiston E.A."/>
            <person name="Young S."/>
            <person name="Zeng Q."/>
            <person name="Goldman W.E."/>
            <person name="Mardis E.R."/>
            <person name="Taylor J.W."/>
            <person name="McEwen J.G."/>
            <person name="Clay O.K."/>
            <person name="Klein B.S."/>
            <person name="Cuomo C.A."/>
        </authorList>
    </citation>
    <scope>NUCLEOTIDE SEQUENCE [LARGE SCALE GENOMIC DNA]</scope>
    <source>
        <strain>SLH14081</strain>
    </source>
</reference>
<organism>
    <name type="scientific">Blastomyces gilchristii (strain SLH14081)</name>
    <name type="common">Blastomyces dermatitidis</name>
    <dbReference type="NCBI Taxonomy" id="559298"/>
    <lineage>
        <taxon>Eukaryota</taxon>
        <taxon>Fungi</taxon>
        <taxon>Dikarya</taxon>
        <taxon>Ascomycota</taxon>
        <taxon>Pezizomycotina</taxon>
        <taxon>Eurotiomycetes</taxon>
        <taxon>Eurotiomycetidae</taxon>
        <taxon>Onygenales</taxon>
        <taxon>Ajellomycetaceae</taxon>
        <taxon>Blastomyces</taxon>
    </lineage>
</organism>
<evidence type="ECO:0000250" key="1"/>
<evidence type="ECO:0000256" key="2">
    <source>
        <dbReference type="SAM" id="MobiDB-lite"/>
    </source>
</evidence>
<evidence type="ECO:0000305" key="3"/>
<dbReference type="EMBL" id="GG657450">
    <property type="protein sequence ID" value="OAT06438.1"/>
    <property type="molecule type" value="Genomic_DNA"/>
</dbReference>
<dbReference type="RefSeq" id="XP_002627965.1">
    <property type="nucleotide sequence ID" value="XM_002627919.1"/>
</dbReference>
<dbReference type="SMR" id="C5JJ91"/>
<dbReference type="STRING" id="559298.C5JJ91"/>
<dbReference type="GeneID" id="8506907"/>
<dbReference type="KEGG" id="bgh:BDBG_02635"/>
<dbReference type="VEuPathDB" id="FungiDB:BDBG_02635"/>
<dbReference type="HOGENOM" id="CLU_033658_0_0_1"/>
<dbReference type="OrthoDB" id="10061064at2759"/>
<dbReference type="Proteomes" id="UP000002038">
    <property type="component" value="Unassembled WGS sequence"/>
</dbReference>
<dbReference type="GO" id="GO:0005737">
    <property type="term" value="C:cytoplasm"/>
    <property type="evidence" value="ECO:0007669"/>
    <property type="project" value="UniProtKB-SubCell"/>
</dbReference>
<dbReference type="GO" id="GO:0031965">
    <property type="term" value="C:nuclear membrane"/>
    <property type="evidence" value="ECO:0007669"/>
    <property type="project" value="TreeGrafter"/>
</dbReference>
<dbReference type="GO" id="GO:0070628">
    <property type="term" value="F:proteasome binding"/>
    <property type="evidence" value="ECO:0007669"/>
    <property type="project" value="TreeGrafter"/>
</dbReference>
<dbReference type="GO" id="GO:0071630">
    <property type="term" value="P:nuclear protein quality control by the ubiquitin-proteasome system"/>
    <property type="evidence" value="ECO:0007669"/>
    <property type="project" value="InterPro"/>
</dbReference>
<dbReference type="GO" id="GO:0031144">
    <property type="term" value="P:proteasome localization"/>
    <property type="evidence" value="ECO:0007669"/>
    <property type="project" value="InterPro"/>
</dbReference>
<dbReference type="GO" id="GO:0015031">
    <property type="term" value="P:protein transport"/>
    <property type="evidence" value="ECO:0007669"/>
    <property type="project" value="UniProtKB-KW"/>
</dbReference>
<dbReference type="FunFam" id="1.20.58.1590:FF:000001">
    <property type="entry name" value="Tethering factor for nuclear proteasome STS1"/>
    <property type="match status" value="1"/>
</dbReference>
<dbReference type="Gene3D" id="1.20.58.1590">
    <property type="entry name" value="Tethering factor for nuclear proteasome Cut8/Sts1"/>
    <property type="match status" value="1"/>
</dbReference>
<dbReference type="InterPro" id="IPR013868">
    <property type="entry name" value="Cut8/Sts1_fam"/>
</dbReference>
<dbReference type="InterPro" id="IPR038422">
    <property type="entry name" value="Cut8/Sts1_sf"/>
</dbReference>
<dbReference type="PANTHER" id="PTHR28032">
    <property type="entry name" value="FI02826P"/>
    <property type="match status" value="1"/>
</dbReference>
<dbReference type="PANTHER" id="PTHR28032:SF1">
    <property type="entry name" value="FI02826P"/>
    <property type="match status" value="1"/>
</dbReference>
<dbReference type="Pfam" id="PF08559">
    <property type="entry name" value="Cut8"/>
    <property type="match status" value="1"/>
</dbReference>